<proteinExistence type="inferred from homology"/>
<geneLocation type="mitochondrion"/>
<name>COX2_PODAN</name>
<organism>
    <name type="scientific">Podospora anserina (strain S / ATCC MYA-4624 / DSM 980 / FGSC 10383)</name>
    <name type="common">Pleurage anserina</name>
    <dbReference type="NCBI Taxonomy" id="515849"/>
    <lineage>
        <taxon>Eukaryota</taxon>
        <taxon>Fungi</taxon>
        <taxon>Dikarya</taxon>
        <taxon>Ascomycota</taxon>
        <taxon>Pezizomycotina</taxon>
        <taxon>Sordariomycetes</taxon>
        <taxon>Sordariomycetidae</taxon>
        <taxon>Sordariales</taxon>
        <taxon>Podosporaceae</taxon>
        <taxon>Podospora</taxon>
        <taxon>Podospora anserina</taxon>
    </lineage>
</organism>
<evidence type="ECO:0000250" key="1">
    <source>
        <dbReference type="UniProtKB" id="P00410"/>
    </source>
</evidence>
<evidence type="ECO:0000255" key="2"/>
<evidence type="ECO:0000305" key="3"/>
<sequence length="250" mass="28541">MFFLINKLVMNFDAPSPWGIYFQDSATPQMEGLNELHDNIMYYLVVILFAVGWILLSIVINYVSTKSPISHKYLNHGTLIELIWTITPAVILILIAFPSFKLLYLMDEVSDPSMSVLAEGHQWYWSYQYPDFLDSNDQFIEFDSYIVPESDLDEGGLRMLEVDNRVVLPELTHVRFIITAGDVIHSFAAPALGIKCDAYPGRLNQVSVFINREGVFYGQCSEICGILHSSMPIVIESVSLEKFLIWLKEQ</sequence>
<protein>
    <recommendedName>
        <fullName>Cytochrome c oxidase subunit 2</fullName>
        <ecNumber>7.1.1.9</ecNumber>
    </recommendedName>
    <alternativeName>
        <fullName>Cytochrome c oxidase polypeptide II</fullName>
    </alternativeName>
</protein>
<feature type="chain" id="PRO_0000183665" description="Cytochrome c oxidase subunit 2">
    <location>
        <begin position="1"/>
        <end position="250"/>
    </location>
</feature>
<feature type="topological domain" description="Mitochondrial intermembrane" evidence="2">
    <location>
        <begin position="1"/>
        <end position="39"/>
    </location>
</feature>
<feature type="transmembrane region" description="Helical" evidence="2">
    <location>
        <begin position="40"/>
        <end position="60"/>
    </location>
</feature>
<feature type="topological domain" description="Mitochondrial matrix" evidence="2">
    <location>
        <begin position="61"/>
        <end position="81"/>
    </location>
</feature>
<feature type="transmembrane region" description="Helical" evidence="2">
    <location>
        <begin position="82"/>
        <end position="104"/>
    </location>
</feature>
<feature type="topological domain" description="Mitochondrial intermembrane" evidence="2">
    <location>
        <begin position="105"/>
        <end position="250"/>
    </location>
</feature>
<feature type="binding site" evidence="1">
    <location>
        <position position="185"/>
    </location>
    <ligand>
        <name>Cu cation</name>
        <dbReference type="ChEBI" id="CHEBI:23378"/>
        <label>A1</label>
    </ligand>
</feature>
<feature type="binding site" evidence="1">
    <location>
        <position position="220"/>
    </location>
    <ligand>
        <name>Cu cation</name>
        <dbReference type="ChEBI" id="CHEBI:23378"/>
        <label>A1</label>
    </ligand>
</feature>
<feature type="binding site" evidence="1">
    <location>
        <position position="220"/>
    </location>
    <ligand>
        <name>Cu cation</name>
        <dbReference type="ChEBI" id="CHEBI:23378"/>
        <label>A2</label>
    </ligand>
</feature>
<feature type="binding site" evidence="1">
    <location>
        <position position="222"/>
    </location>
    <ligand>
        <name>Cu cation</name>
        <dbReference type="ChEBI" id="CHEBI:23378"/>
        <label>A2</label>
    </ligand>
</feature>
<feature type="binding site" evidence="1">
    <location>
        <position position="222"/>
    </location>
    <ligand>
        <name>Mg(2+)</name>
        <dbReference type="ChEBI" id="CHEBI:18420"/>
        <note>ligand shared with subunit 1</note>
    </ligand>
</feature>
<feature type="binding site" evidence="1">
    <location>
        <position position="224"/>
    </location>
    <ligand>
        <name>Cu cation</name>
        <dbReference type="ChEBI" id="CHEBI:23378"/>
        <label>A1</label>
    </ligand>
</feature>
<feature type="binding site" evidence="1">
    <location>
        <position position="224"/>
    </location>
    <ligand>
        <name>Cu cation</name>
        <dbReference type="ChEBI" id="CHEBI:23378"/>
        <label>A2</label>
    </ligand>
</feature>
<feature type="binding site" evidence="1">
    <location>
        <position position="228"/>
    </location>
    <ligand>
        <name>Cu cation</name>
        <dbReference type="ChEBI" id="CHEBI:23378"/>
        <label>A2</label>
    </ligand>
</feature>
<feature type="binding site" evidence="1">
    <location>
        <position position="231"/>
    </location>
    <ligand>
        <name>Cu cation</name>
        <dbReference type="ChEBI" id="CHEBI:23378"/>
        <label>A1</label>
    </ligand>
</feature>
<dbReference type="EC" id="7.1.1.9"/>
<dbReference type="EMBL" id="X55026">
    <property type="protein sequence ID" value="CAA38803.1"/>
    <property type="molecule type" value="Genomic_DNA"/>
</dbReference>
<dbReference type="PIR" id="S09135">
    <property type="entry name" value="OBJJMP"/>
</dbReference>
<dbReference type="SMR" id="P20682"/>
<dbReference type="FunCoup" id="P20682">
    <property type="interactions" value="208"/>
</dbReference>
<dbReference type="STRING" id="515849.P20682"/>
<dbReference type="KEGG" id="pan:PoanfMp43"/>
<dbReference type="InParanoid" id="P20682"/>
<dbReference type="Proteomes" id="UP000001197">
    <property type="component" value="Mitochondrion"/>
</dbReference>
<dbReference type="GO" id="GO:0005743">
    <property type="term" value="C:mitochondrial inner membrane"/>
    <property type="evidence" value="ECO:0007669"/>
    <property type="project" value="UniProtKB-SubCell"/>
</dbReference>
<dbReference type="GO" id="GO:0005507">
    <property type="term" value="F:copper ion binding"/>
    <property type="evidence" value="ECO:0007669"/>
    <property type="project" value="InterPro"/>
</dbReference>
<dbReference type="GO" id="GO:0004129">
    <property type="term" value="F:cytochrome-c oxidase activity"/>
    <property type="evidence" value="ECO:0007669"/>
    <property type="project" value="UniProtKB-EC"/>
</dbReference>
<dbReference type="GO" id="GO:0042773">
    <property type="term" value="P:ATP synthesis coupled electron transport"/>
    <property type="evidence" value="ECO:0007669"/>
    <property type="project" value="TreeGrafter"/>
</dbReference>
<dbReference type="CDD" id="cd13912">
    <property type="entry name" value="CcO_II_C"/>
    <property type="match status" value="1"/>
</dbReference>
<dbReference type="FunFam" id="1.10.287.90:FF:000004">
    <property type="entry name" value="Cytochrome c oxidase subunit 2"/>
    <property type="match status" value="1"/>
</dbReference>
<dbReference type="FunFam" id="2.60.40.420:FF:000001">
    <property type="entry name" value="Cytochrome c oxidase subunit 2"/>
    <property type="match status" value="1"/>
</dbReference>
<dbReference type="Gene3D" id="1.10.287.90">
    <property type="match status" value="1"/>
</dbReference>
<dbReference type="Gene3D" id="2.60.40.420">
    <property type="entry name" value="Cupredoxins - blue copper proteins"/>
    <property type="match status" value="1"/>
</dbReference>
<dbReference type="InterPro" id="IPR045187">
    <property type="entry name" value="CcO_II"/>
</dbReference>
<dbReference type="InterPro" id="IPR002429">
    <property type="entry name" value="CcO_II-like_C"/>
</dbReference>
<dbReference type="InterPro" id="IPR034210">
    <property type="entry name" value="CcO_II_C"/>
</dbReference>
<dbReference type="InterPro" id="IPR001505">
    <property type="entry name" value="Copper_CuA"/>
</dbReference>
<dbReference type="InterPro" id="IPR008972">
    <property type="entry name" value="Cupredoxin"/>
</dbReference>
<dbReference type="InterPro" id="IPR014222">
    <property type="entry name" value="Cyt_c_oxidase_su2"/>
</dbReference>
<dbReference type="InterPro" id="IPR011759">
    <property type="entry name" value="Cyt_c_oxidase_su2_TM_dom"/>
</dbReference>
<dbReference type="InterPro" id="IPR036257">
    <property type="entry name" value="Cyt_c_oxidase_su2_TM_sf"/>
</dbReference>
<dbReference type="NCBIfam" id="TIGR02866">
    <property type="entry name" value="CoxB"/>
    <property type="match status" value="1"/>
</dbReference>
<dbReference type="PANTHER" id="PTHR22888:SF9">
    <property type="entry name" value="CYTOCHROME C OXIDASE SUBUNIT 2"/>
    <property type="match status" value="1"/>
</dbReference>
<dbReference type="PANTHER" id="PTHR22888">
    <property type="entry name" value="CYTOCHROME C OXIDASE, SUBUNIT II"/>
    <property type="match status" value="1"/>
</dbReference>
<dbReference type="Pfam" id="PF00116">
    <property type="entry name" value="COX2"/>
    <property type="match status" value="1"/>
</dbReference>
<dbReference type="Pfam" id="PF02790">
    <property type="entry name" value="COX2_TM"/>
    <property type="match status" value="1"/>
</dbReference>
<dbReference type="PRINTS" id="PR01166">
    <property type="entry name" value="CYCOXIDASEII"/>
</dbReference>
<dbReference type="SUPFAM" id="SSF49503">
    <property type="entry name" value="Cupredoxins"/>
    <property type="match status" value="1"/>
</dbReference>
<dbReference type="SUPFAM" id="SSF81464">
    <property type="entry name" value="Cytochrome c oxidase subunit II-like, transmembrane region"/>
    <property type="match status" value="1"/>
</dbReference>
<dbReference type="PROSITE" id="PS00078">
    <property type="entry name" value="COX2"/>
    <property type="match status" value="1"/>
</dbReference>
<dbReference type="PROSITE" id="PS50857">
    <property type="entry name" value="COX2_CUA"/>
    <property type="match status" value="1"/>
</dbReference>
<dbReference type="PROSITE" id="PS50999">
    <property type="entry name" value="COX2_TM"/>
    <property type="match status" value="1"/>
</dbReference>
<comment type="function">
    <text evidence="1">Component of the cytochrome c oxidase, the last enzyme in the mitochondrial electron transport chain which drives oxidative phosphorylation. The respiratory chain contains 3 multisubunit complexes succinate dehydrogenase (complex II, CII), ubiquinol-cytochrome c oxidoreductase (cytochrome b-c1 complex, complex III, CIII) and cytochrome c oxidase (complex IV, CIV), that cooperate to transfer electrons derived from NADH and succinate to molecular oxygen, creating an electrochemical gradient over the inner membrane that drives transmembrane transport and the ATP synthase. Cytochrome c oxidase is the component of the respiratory chain that catalyzes the reduction of oxygen to water. Electrons originating from reduced cytochrome c in the intermembrane space (IMS) are transferred via the dinuclear copper A center (CU(A)) of subunit 2 and heme A of subunit 1 to the active site in subunit 1, a binuclear center (BNC) formed by heme A3 and copper B (CU(B)). The BNC reduces molecular oxygen to 2 water molecules using 4 electrons from cytochrome c in the IMS and 4 protons from the mitochondrial matrix.</text>
</comment>
<comment type="catalytic activity">
    <reaction evidence="1">
        <text>4 Fe(II)-[cytochrome c] + O2 + 8 H(+)(in) = 4 Fe(III)-[cytochrome c] + 2 H2O + 4 H(+)(out)</text>
        <dbReference type="Rhea" id="RHEA:11436"/>
        <dbReference type="Rhea" id="RHEA-COMP:10350"/>
        <dbReference type="Rhea" id="RHEA-COMP:14399"/>
        <dbReference type="ChEBI" id="CHEBI:15377"/>
        <dbReference type="ChEBI" id="CHEBI:15378"/>
        <dbReference type="ChEBI" id="CHEBI:15379"/>
        <dbReference type="ChEBI" id="CHEBI:29033"/>
        <dbReference type="ChEBI" id="CHEBI:29034"/>
        <dbReference type="EC" id="7.1.1.9"/>
    </reaction>
    <physiologicalReaction direction="left-to-right" evidence="1">
        <dbReference type="Rhea" id="RHEA:11437"/>
    </physiologicalReaction>
</comment>
<comment type="cofactor">
    <cofactor evidence="1">
        <name>Cu cation</name>
        <dbReference type="ChEBI" id="CHEBI:23378"/>
    </cofactor>
    <text evidence="1">Binds a dinuclear copper A center per subunit.</text>
</comment>
<comment type="subunit">
    <text evidence="1">Component of the cytochrome c oxidase (complex IV, CIV), a multisubunit enzyme composed of a catalytic core of 3 subunits and several supernumerary subunits. The complex exists as a monomer or a dimer and forms supercomplexes (SCs) in the inner mitochondrial membrane with ubiquinol-cytochrome c oxidoreductase (cytochrome b-c1 complex, complex III, CIII).</text>
</comment>
<comment type="subcellular location">
    <subcellularLocation>
        <location evidence="1">Mitochondrion inner membrane</location>
        <topology evidence="1">Multi-pass membrane protein</topology>
    </subcellularLocation>
</comment>
<comment type="similarity">
    <text evidence="3">Belongs to the cytochrome c oxidase subunit 2 family.</text>
</comment>
<reference key="1">
    <citation type="journal article" date="1990" name="J. Mol. Biol.">
        <title>Mitochondrial DNA sequence analysis of the cytochrome oxidase subunit II gene from Podospora anserina. A group IA intron with a putative alternative splice site.</title>
        <authorList>
            <person name="Cummings D.J."/>
            <person name="Michel F."/>
            <person name="Domenico J.M."/>
            <person name="McNally K.L."/>
        </authorList>
    </citation>
    <scope>NUCLEOTIDE SEQUENCE [GENOMIC DNA]</scope>
    <source>
        <strain>A</strain>
        <strain>s</strain>
    </source>
</reference>
<reference key="2">
    <citation type="journal article" date="1990" name="Curr. Genet.">
        <title>The complete DNA sequence of the mitochondrial genome of Podospora anserina.</title>
        <authorList>
            <person name="Cummings D.J."/>
            <person name="McNally K.L."/>
            <person name="Domenico J.M."/>
            <person name="Matsuura E.T."/>
        </authorList>
    </citation>
    <scope>NUCLEOTIDE SEQUENCE [LARGE SCALE GENOMIC DNA]</scope>
    <source>
        <strain>s</strain>
    </source>
</reference>
<gene>
    <name type="primary">COII</name>
</gene>
<keyword id="KW-0186">Copper</keyword>
<keyword id="KW-0249">Electron transport</keyword>
<keyword id="KW-0460">Magnesium</keyword>
<keyword id="KW-0472">Membrane</keyword>
<keyword id="KW-0479">Metal-binding</keyword>
<keyword id="KW-0496">Mitochondrion</keyword>
<keyword id="KW-0999">Mitochondrion inner membrane</keyword>
<keyword id="KW-1185">Reference proteome</keyword>
<keyword id="KW-0679">Respiratory chain</keyword>
<keyword id="KW-1278">Translocase</keyword>
<keyword id="KW-0812">Transmembrane</keyword>
<keyword id="KW-1133">Transmembrane helix</keyword>
<keyword id="KW-0813">Transport</keyword>
<accession>P20682</accession>